<reference key="1">
    <citation type="journal article" date="1990" name="Virology">
        <title>Sequence analysis of P gene of human parainfluenza type 2 virus: P and cysteine-rich proteins are translated by two mRNAs that differ by two nontemplated G residues.</title>
        <authorList>
            <person name="Ohgimoto S."/>
            <person name="Bando H."/>
            <person name="Kawano M."/>
            <person name="Okamoto K."/>
            <person name="Kondo K."/>
            <person name="Tsurudome M."/>
            <person name="Nishio M."/>
            <person name="Ito Y."/>
        </authorList>
    </citation>
    <scope>NUCLEOTIDE SEQUENCE [GENOMIC RNA]</scope>
    <scope>RNA EDITING</scope>
</reference>
<dbReference type="EMBL" id="M37751">
    <property type="status" value="NOT_ANNOTATED_CDS"/>
    <property type="molecule type" value="Genomic_RNA"/>
</dbReference>
<dbReference type="EMBL" id="X57559">
    <property type="status" value="NOT_ANNOTATED_CDS"/>
    <property type="molecule type" value="Genomic_DNA"/>
</dbReference>
<dbReference type="PIR" id="B35313">
    <property type="entry name" value="RRNZVT"/>
</dbReference>
<dbReference type="SMR" id="P23056"/>
<dbReference type="Proteomes" id="UP000000472">
    <property type="component" value="Segment"/>
</dbReference>
<dbReference type="GO" id="GO:0030430">
    <property type="term" value="C:host cell cytoplasm"/>
    <property type="evidence" value="ECO:0007669"/>
    <property type="project" value="UniProtKB-SubCell"/>
</dbReference>
<dbReference type="Gene3D" id="1.20.5.300">
    <property type="match status" value="1"/>
</dbReference>
<dbReference type="Gene3D" id="1.10.8.10">
    <property type="entry name" value="DNA helicase RuvA subunit, C-terminal domain"/>
    <property type="match status" value="1"/>
</dbReference>
<dbReference type="InterPro" id="IPR004897">
    <property type="entry name" value="P/V_Pprotein_paramyxoviral"/>
</dbReference>
<dbReference type="InterPro" id="IPR025909">
    <property type="entry name" value="Soyouz_module"/>
</dbReference>
<dbReference type="Pfam" id="PF03210">
    <property type="entry name" value="Paramyx_P_V_C"/>
    <property type="match status" value="1"/>
</dbReference>
<dbReference type="Pfam" id="PF14313">
    <property type="entry name" value="Soyouz_module"/>
    <property type="match status" value="1"/>
</dbReference>
<comment type="function">
    <text evidence="2 3 4">Essential cofactor of the RNA polymerase L that plays a central role in the transcription and replication by forming the polymerase complex with RNA polymerase L and recruiting L to the genomic N-RNA template for RNA synthesis (By similarity). Also plays a central role in the encapsidation of nascent RNA chains by forming the encapsidation complex with the nucleocapsid protein N (N-P complex). Acts as a chaperone for newly synthesized free N protein, so-called N0, allowing encapsidation of nascent RNA chains during replication (By similarity). The nucleoprotein protein N prevents excessive phosphorylation of P, which leads to down-regulation of viral transcription/ replication. Participates, together with N, in the formation of viral factories (viroplasms), which are large inclusions in the host cytoplasm where replication takes place (By similarity). Also plays a role in viral growth by promoting host RHOA activation and thus actin formation via ARHGAP26 inhibition (By similarity).</text>
</comment>
<comment type="subunit">
    <text evidence="2 3 4">Homotetramer. Interacts (via multimerization domain) with polymerase L; this interaction forms the polymerase L-P complex (By similarity). Interacts (via N-terminus) with N0 (via Ncore); this interaction allows P to chaperon N0 to avoid N polymerization before encapsidation. Interacts (via C-terminus) with N-RNA template; this interaction positions the polymerase on the template for both transcription and replication (By similarity). Interacts with host ARHGAP26; this interaction promotes host RHOA activation. Interacts with host KPNA1 and KPNA6.</text>
</comment>
<comment type="subcellular location">
    <subcellularLocation>
        <location evidence="3">Host cytoplasm</location>
    </subcellularLocation>
</comment>
<comment type="domain">
    <text evidence="1 2 4">The N-terminus consists of a long intrinsically disordered tail. The central part contains the coiled-coil multimerization domain (PMD) (By similarity). Forms a four-stranded coiled coil structure (By similarity). The C-terminus constitutes the alpha-helical domain that binds to the nucleocapsid (N-RNA complex) (By similarity).</text>
</comment>
<comment type="RNA editing">
    <location>
        <position position="164" evidence="6"/>
    </location>
    <text>Partially edited. RNA editing at this position consists of an insertion of two guanine nucleotides. The sequence displayed here is the P protein, derived from the edited RNA. The unedited RNA version gives rise to the V protein (AC P23057).</text>
</comment>
<comment type="similarity">
    <text evidence="7">Belongs to the rubulavirus/avulavirus P protein family.</text>
</comment>
<proteinExistence type="inferred from homology"/>
<accession>P23056</accession>
<feature type="chain" id="PRO_0000142704" description="Phosphoprotein">
    <location>
        <begin position="1"/>
        <end position="395"/>
    </location>
</feature>
<feature type="region of interest" description="Disordered" evidence="5">
    <location>
        <begin position="178"/>
        <end position="217"/>
    </location>
</feature>
<feature type="region of interest" description="Multimerization" evidence="4">
    <location>
        <begin position="220"/>
        <end position="283"/>
    </location>
</feature>
<feature type="compositionally biased region" description="Low complexity" evidence="5">
    <location>
        <begin position="206"/>
        <end position="217"/>
    </location>
</feature>
<organismHost>
    <name type="scientific">Homo sapiens</name>
    <name type="common">Human</name>
    <dbReference type="NCBI Taxonomy" id="9606"/>
</organismHost>
<evidence type="ECO:0000250" key="1">
    <source>
        <dbReference type="UniProtKB" id="P04859"/>
    </source>
</evidence>
<evidence type="ECO:0000250" key="2">
    <source>
        <dbReference type="UniProtKB" id="P06162"/>
    </source>
</evidence>
<evidence type="ECO:0000250" key="3">
    <source>
        <dbReference type="UniProtKB" id="P23055"/>
    </source>
</evidence>
<evidence type="ECO:0000250" key="4">
    <source>
        <dbReference type="UniProtKB" id="Q77M42"/>
    </source>
</evidence>
<evidence type="ECO:0000256" key="5">
    <source>
        <dbReference type="SAM" id="MobiDB-lite"/>
    </source>
</evidence>
<evidence type="ECO:0000269" key="6">
    <source>
    </source>
</evidence>
<evidence type="ECO:0000305" key="7"/>
<sequence length="395" mass="42152">MAEEPTYTTEQVDELIHAGLGTVDFFLSRPIDAQSSLGKGSIPPGVTAVLTSAAETKSKPVAAGPVKPRRKKVISNTTPYTIADNIPPEKLPINTPIPNPLLPLARPHGKMTDIDIVTGNITEGSYKGVELAKLGKQTLLTRFTSNEPVSSAGSAQDPNFKRGGELIEKEQEATIGENGVLHGSEIRSKSSSGVIPGVPQSRPQLASSPAHADPAPASAENVKEIIELLKGLDLRLQTVEGKVDKILATSATIINLKNEMTSLKASVATMEGMITTIKIMDPSTPTNVPVEEIRKSLHNVPVVIAGPTSGGFTAEQVILISMDELARPTLSSTKRITRKPESKKDLTGIKLTLMQLANDCISRPDTKTEFVTKIQAATTESQLNEIKRSIIRSAI</sequence>
<name>PHOSP_PI2HT</name>
<protein>
    <recommendedName>
        <fullName>Phosphoprotein</fullName>
        <shortName>Protein P</shortName>
    </recommendedName>
</protein>
<keyword id="KW-1035">Host cytoplasm</keyword>
<keyword id="KW-0597">Phosphoprotein</keyword>
<keyword id="KW-1185">Reference proteome</keyword>
<keyword id="KW-0691">RNA editing</keyword>
<keyword id="KW-0693">Viral RNA replication</keyword>
<gene>
    <name type="primary">P/V</name>
</gene>
<organism>
    <name type="scientific">Human parainfluenza 2 virus (strain Toshiba)</name>
    <name type="common">HPIV-2</name>
    <dbReference type="NCBI Taxonomy" id="11214"/>
    <lineage>
        <taxon>Viruses</taxon>
        <taxon>Riboviria</taxon>
        <taxon>Orthornavirae</taxon>
        <taxon>Negarnaviricota</taxon>
        <taxon>Haploviricotina</taxon>
        <taxon>Monjiviricetes</taxon>
        <taxon>Mononegavirales</taxon>
        <taxon>Paramyxoviridae</taxon>
        <taxon>Rubulavirinae</taxon>
        <taxon>Orthorubulavirus</taxon>
        <taxon>Orthorubulavirus laryngotracheitidis</taxon>
        <taxon>Human parainfluenza 2 virus</taxon>
    </lineage>
</organism>